<sequence>MMSFLHIVFSILVVVAFILGNFANGFIALINFIAWVKRQKISSADQIIAALAVSRVGLLWVILLHWYSTVLNPTSSNLKVIIFISNAWAVTNHFSIWLATSLSIFYLLKIVNFSRLIFHHLKRKAKSVVLVIVLGSLFFLVCHLVMKHTYINVWTEECEGNVTWKIKLRNAMHLSNLTVAMLANLIPFTLTLISFLLLIYSLCKHLKKMQLHGKGSQDPSTKIHIKALQTVTSFLILLAIYFLCLIISFWNFKMRPKEIVLMLCQAFGIIYPSFHSFILIWGNKTLKQTFLSVLWQVTCWAKGQNQSTP</sequence>
<name>T2R20_HUMAN</name>
<evidence type="ECO:0000250" key="1"/>
<evidence type="ECO:0000255" key="2"/>
<evidence type="ECO:0000269" key="3">
    <source>
    </source>
</evidence>
<evidence type="ECO:0000269" key="4">
    <source>
    </source>
</evidence>
<evidence type="ECO:0000305" key="5"/>
<comment type="function">
    <text evidence="1">Receptor that may play a role in the perception of bitterness and is gustducin-linked. May play a role in sensing the chemical composition of the gastrointestinal content. The activity of this receptor may stimulate alpha gustducin, mediate PLC-beta-2 activation and lead to the gating of TRPM5 (By similarity).</text>
</comment>
<comment type="subcellular location">
    <subcellularLocation>
        <location>Membrane</location>
        <topology>Multi-pass membrane protein</topology>
    </subcellularLocation>
</comment>
<comment type="tissue specificity">
    <text>Expressed in subsets of taste receptor cells of the tongue and exclusively in gustducin-positive cells.</text>
</comment>
<comment type="miscellaneous">
    <text>Most taste cells may be activated by a limited number of bitter compounds; individual taste cells can discriminate among bitter stimuli.</text>
</comment>
<comment type="similarity">
    <text evidence="5">Belongs to the G-protein coupled receptor T2R family.</text>
</comment>
<protein>
    <recommendedName>
        <fullName>Taste receptor type 2 member 20</fullName>
    </recommendedName>
    <alternativeName>
        <fullName>Taste receptor type 2 member 49</fullName>
        <shortName>T2R49</shortName>
    </alternativeName>
    <alternativeName>
        <fullName>Taste receptor type 2 member 56</fullName>
        <shortName>T2R56</shortName>
    </alternativeName>
</protein>
<keyword id="KW-0297">G-protein coupled receptor</keyword>
<keyword id="KW-0325">Glycoprotein</keyword>
<keyword id="KW-0472">Membrane</keyword>
<keyword id="KW-0675">Receptor</keyword>
<keyword id="KW-1185">Reference proteome</keyword>
<keyword id="KW-0716">Sensory transduction</keyword>
<keyword id="KW-0919">Taste</keyword>
<keyword id="KW-0807">Transducer</keyword>
<keyword id="KW-0812">Transmembrane</keyword>
<keyword id="KW-1133">Transmembrane helix</keyword>
<accession>P59543</accession>
<accession>P59549</accession>
<accession>Q2HIZ4</accession>
<accession>Q496D8</accession>
<accession>Q645X9</accession>
<proteinExistence type="evidence at transcript level"/>
<reference key="1">
    <citation type="journal article" date="2002" name="Nat. Genet.">
        <title>The human TAS2R16 receptor mediates bitter taste in response to beta-glucopyranosides.</title>
        <authorList>
            <person name="Bufe B."/>
            <person name="Hofmann T."/>
            <person name="Krautwurst D."/>
            <person name="Raguse J.-D."/>
            <person name="Meyerhof W."/>
        </authorList>
    </citation>
    <scope>NUCLEOTIDE SEQUENCE [GENOMIC DNA]</scope>
</reference>
<reference key="2">
    <citation type="journal article" date="2002" name="Cytogenet. Genome Res.">
        <title>Identification and characterization of human taste receptor genes belonging to the TAS2R family.</title>
        <authorList>
            <person name="Conte C."/>
            <person name="Ebeling M."/>
            <person name="Marcuz A."/>
            <person name="Nef P."/>
            <person name="Andres-Barquin P.J."/>
        </authorList>
    </citation>
    <scope>NUCLEOTIDE SEQUENCE [GENOMIC DNA]</scope>
</reference>
<reference key="3">
    <citation type="journal article" date="2005" name="Mol. Biol. Evol.">
        <title>Evolution of bitter taste receptors in humans and apes.</title>
        <authorList>
            <person name="Fischer A."/>
            <person name="Gilad Y."/>
            <person name="Man O."/>
            <person name="Paeaebo S."/>
        </authorList>
    </citation>
    <scope>NUCLEOTIDE SEQUENCE [GENOMIC DNA]</scope>
    <scope>VARIANTS ASN-148; VAL-236; SER-252 AND LEU-255</scope>
</reference>
<reference key="4">
    <citation type="journal article" date="2004" name="Genome Res.">
        <title>The status, quality, and expansion of the NIH full-length cDNA project: the Mammalian Gene Collection (MGC).</title>
        <authorList>
            <consortium name="The MGC Project Team"/>
        </authorList>
    </citation>
    <scope>NUCLEOTIDE SEQUENCE [LARGE SCALE MRNA]</scope>
    <scope>VARIANT GLU-79</scope>
</reference>
<reference key="5">
    <citation type="journal article" date="2002" name="Curr. Opin. Neurobiol.">
        <title>Receptors for bitter and sweet taste.</title>
        <authorList>
            <person name="Montmayeur J.-P."/>
            <person name="Matsunami H."/>
        </authorList>
    </citation>
    <scope>REVIEW</scope>
</reference>
<reference key="6">
    <citation type="journal article" date="2002" name="J. Biol. Chem.">
        <title>Molecular mechanisms of bitter and sweet taste transduction.</title>
        <authorList>
            <person name="Margolskee R.F."/>
        </authorList>
    </citation>
    <scope>REVIEW</scope>
</reference>
<reference key="7">
    <citation type="journal article" date="2003" name="Cell">
        <title>Coding of sweet, bitter, and umami tastes: different receptor cells sharing similar signaling pathways.</title>
        <authorList>
            <person name="Zhang Y."/>
            <person name="Hoon M.A."/>
            <person name="Chandrashekar J."/>
            <person name="Mueller K.L."/>
            <person name="Cook B."/>
            <person name="Wu D."/>
            <person name="Zuker C.S."/>
            <person name="Ryba N.J."/>
        </authorList>
    </citation>
    <scope>REVIEW</scope>
</reference>
<feature type="chain" id="PRO_0000082331" description="Taste receptor type 2 member 20">
    <location>
        <begin position="1"/>
        <end position="309"/>
    </location>
</feature>
<feature type="topological domain" description="Extracellular" evidence="2">
    <location>
        <begin position="1"/>
        <end position="6"/>
    </location>
</feature>
<feature type="transmembrane region" description="Helical; Name=1" evidence="2">
    <location>
        <begin position="7"/>
        <end position="27"/>
    </location>
</feature>
<feature type="topological domain" description="Cytoplasmic" evidence="2">
    <location>
        <begin position="28"/>
        <end position="46"/>
    </location>
</feature>
<feature type="transmembrane region" description="Helical; Name=2" evidence="2">
    <location>
        <begin position="47"/>
        <end position="67"/>
    </location>
</feature>
<feature type="topological domain" description="Extracellular" evidence="2">
    <location>
        <begin position="68"/>
        <end position="79"/>
    </location>
</feature>
<feature type="transmembrane region" description="Helical; Name=3" evidence="2">
    <location>
        <begin position="80"/>
        <end position="100"/>
    </location>
</feature>
<feature type="topological domain" description="Cytoplasmic" evidence="2">
    <location>
        <begin position="101"/>
        <end position="125"/>
    </location>
</feature>
<feature type="transmembrane region" description="Helical; Name=4" evidence="2">
    <location>
        <begin position="126"/>
        <end position="146"/>
    </location>
</feature>
<feature type="topological domain" description="Extracellular" evidence="2">
    <location>
        <begin position="147"/>
        <end position="178"/>
    </location>
</feature>
<feature type="transmembrane region" description="Helical; Name=5" evidence="2">
    <location>
        <begin position="179"/>
        <end position="199"/>
    </location>
</feature>
<feature type="topological domain" description="Cytoplasmic" evidence="2">
    <location>
        <begin position="200"/>
        <end position="229"/>
    </location>
</feature>
<feature type="transmembrane region" description="Helical; Name=6" evidence="2">
    <location>
        <begin position="230"/>
        <end position="250"/>
    </location>
</feature>
<feature type="topological domain" description="Extracellular" evidence="2">
    <location>
        <begin position="251"/>
        <end position="259"/>
    </location>
</feature>
<feature type="transmembrane region" description="Helical; Name=7" evidence="2">
    <location>
        <begin position="260"/>
        <end position="280"/>
    </location>
</feature>
<feature type="topological domain" description="Cytoplasmic" evidence="2">
    <location>
        <begin position="281"/>
        <end position="309"/>
    </location>
</feature>
<feature type="glycosylation site" description="N-linked (GlcNAc...) asparagine" evidence="2">
    <location>
        <position position="161"/>
    </location>
</feature>
<feature type="glycosylation site" description="N-linked (GlcNAc...) asparagine" evidence="2">
    <location>
        <position position="176"/>
    </location>
</feature>
<feature type="sequence variant" id="VAR_053356" description="In dbSNP:rs7135018." evidence="3">
    <original>K</original>
    <variation>E</variation>
    <location>
        <position position="79"/>
    </location>
</feature>
<feature type="sequence variant" id="VAR_053357" description="In dbSNP:rs12226920.">
    <original>H</original>
    <variation>Q</variation>
    <location>
        <position position="143"/>
    </location>
</feature>
<feature type="sequence variant" id="VAR_053358" description="In dbSNP:rs12226919." evidence="4">
    <original>H</original>
    <variation>N</variation>
    <location>
        <position position="148"/>
    </location>
</feature>
<feature type="sequence variant" id="VAR_053359" description="In dbSNP:rs10845281." evidence="4">
    <original>I</original>
    <variation>V</variation>
    <location>
        <position position="236"/>
    </location>
</feature>
<feature type="sequence variant" id="VAR_053360" description="In dbSNP:rs10845280." evidence="4">
    <original>F</original>
    <variation>S</variation>
    <location>
        <position position="252"/>
    </location>
</feature>
<feature type="sequence variant" id="VAR_053361" description="In dbSNP:rs10845279." evidence="4">
    <original>R</original>
    <variation>L</variation>
    <location>
        <position position="255"/>
    </location>
</feature>
<feature type="sequence conflict" description="In Ref. 3; AAU21140." evidence="5" ref="3">
    <original>I</original>
    <variation>V</variation>
    <location>
        <position position="33"/>
    </location>
</feature>
<feature type="sequence conflict" description="In Ref. 1; AAM19327." evidence="5" ref="1">
    <original>R</original>
    <variation>K</variation>
    <location>
        <position position="55"/>
    </location>
</feature>
<feature type="sequence conflict" description="In Ref. 3; AAU21140." evidence="5" ref="3">
    <original>VCH</original>
    <variation>ICQ</variation>
    <location>
        <begin position="141"/>
        <end position="143"/>
    </location>
</feature>
<organism>
    <name type="scientific">Homo sapiens</name>
    <name type="common">Human</name>
    <dbReference type="NCBI Taxonomy" id="9606"/>
    <lineage>
        <taxon>Eukaryota</taxon>
        <taxon>Metazoa</taxon>
        <taxon>Chordata</taxon>
        <taxon>Craniata</taxon>
        <taxon>Vertebrata</taxon>
        <taxon>Euteleostomi</taxon>
        <taxon>Mammalia</taxon>
        <taxon>Eutheria</taxon>
        <taxon>Euarchontoglires</taxon>
        <taxon>Primates</taxon>
        <taxon>Haplorrhini</taxon>
        <taxon>Catarrhini</taxon>
        <taxon>Hominidae</taxon>
        <taxon>Homo</taxon>
    </lineage>
</organism>
<gene>
    <name type="primary">TAS2R20</name>
    <name type="synonym">TAS2R49</name>
</gene>
<dbReference type="EMBL" id="AF494236">
    <property type="protein sequence ID" value="AAM19327.1"/>
    <property type="molecule type" value="Genomic_DNA"/>
</dbReference>
<dbReference type="EMBL" id="AY114092">
    <property type="protein sequence ID" value="AAM63542.1"/>
    <property type="molecule type" value="Genomic_DNA"/>
</dbReference>
<dbReference type="EMBL" id="AY724938">
    <property type="protein sequence ID" value="AAU21140.1"/>
    <property type="molecule type" value="Genomic_DNA"/>
</dbReference>
<dbReference type="EMBL" id="BC100915">
    <property type="protein sequence ID" value="AAI00916.1"/>
    <property type="molecule type" value="mRNA"/>
</dbReference>
<dbReference type="EMBL" id="BC100916">
    <property type="protein sequence ID" value="AAI00917.1"/>
    <property type="molecule type" value="mRNA"/>
</dbReference>
<dbReference type="EMBL" id="BC100918">
    <property type="protein sequence ID" value="AAI00919.1"/>
    <property type="molecule type" value="mRNA"/>
</dbReference>
<dbReference type="EMBL" id="BC113843">
    <property type="protein sequence ID" value="AAI13844.1"/>
    <property type="molecule type" value="mRNA"/>
</dbReference>
<dbReference type="CCDS" id="CCDS8639.1"/>
<dbReference type="RefSeq" id="NP_795370.2">
    <property type="nucleotide sequence ID" value="NM_176889.4"/>
</dbReference>
<dbReference type="SMR" id="P59543"/>
<dbReference type="BioGRID" id="129250">
    <property type="interactions" value="3"/>
</dbReference>
<dbReference type="FunCoup" id="P59543">
    <property type="interactions" value="230"/>
</dbReference>
<dbReference type="IntAct" id="P59543">
    <property type="interactions" value="1"/>
</dbReference>
<dbReference type="STRING" id="9606.ENSP00000441624"/>
<dbReference type="ChEMBL" id="CHEMBL3559705"/>
<dbReference type="DrugCentral" id="P59543"/>
<dbReference type="GuidetoPHARMACOLOGY" id="671"/>
<dbReference type="GlyCosmos" id="P59543">
    <property type="glycosylation" value="2 sites, No reported glycans"/>
</dbReference>
<dbReference type="GlyGen" id="P59543">
    <property type="glycosylation" value="2 sites"/>
</dbReference>
<dbReference type="iPTMnet" id="P59543"/>
<dbReference type="PhosphoSitePlus" id="P59543"/>
<dbReference type="BioMuta" id="TAS2R20"/>
<dbReference type="DMDM" id="55977811"/>
<dbReference type="PaxDb" id="9606-ENSP00000441624"/>
<dbReference type="Antibodypedia" id="51096">
    <property type="antibodies" value="89 antibodies from 19 providers"/>
</dbReference>
<dbReference type="DNASU" id="259295"/>
<dbReference type="Ensembl" id="ENST00000538986.2">
    <property type="protein sequence ID" value="ENSP00000441624.1"/>
    <property type="gene ID" value="ENSG00000255837.2"/>
</dbReference>
<dbReference type="Ensembl" id="ENST00000570941.1">
    <property type="protein sequence ID" value="ENSP00000459353.1"/>
    <property type="gene ID" value="ENSG00000273092.1"/>
</dbReference>
<dbReference type="GeneID" id="259295"/>
<dbReference type="KEGG" id="hsa:259295"/>
<dbReference type="MANE-Select" id="ENST00000538986.2">
    <property type="protein sequence ID" value="ENSP00000441624.1"/>
    <property type="RefSeq nucleotide sequence ID" value="NM_176889.4"/>
    <property type="RefSeq protein sequence ID" value="NP_795370.2"/>
</dbReference>
<dbReference type="UCSC" id="uc001qzm.3">
    <property type="organism name" value="human"/>
</dbReference>
<dbReference type="AGR" id="HGNC:19109"/>
<dbReference type="CTD" id="259295"/>
<dbReference type="DisGeNET" id="259295"/>
<dbReference type="GeneCards" id="TAS2R20"/>
<dbReference type="HGNC" id="HGNC:19109">
    <property type="gene designation" value="TAS2R20"/>
</dbReference>
<dbReference type="HPA" id="ENSG00000255837">
    <property type="expression patterns" value="Low tissue specificity"/>
</dbReference>
<dbReference type="MalaCards" id="TAS2R20"/>
<dbReference type="MIM" id="613962">
    <property type="type" value="gene"/>
</dbReference>
<dbReference type="neXtProt" id="NX_P59543"/>
<dbReference type="OpenTargets" id="ENSG00000255837"/>
<dbReference type="VEuPathDB" id="HostDB:ENSG00000255837"/>
<dbReference type="eggNOG" id="ENOG502TE6U">
    <property type="taxonomic scope" value="Eukaryota"/>
</dbReference>
<dbReference type="GeneTree" id="ENSGT01100000263477"/>
<dbReference type="HOGENOM" id="CLU_072337_2_0_1"/>
<dbReference type="InParanoid" id="P59543"/>
<dbReference type="OMA" id="INFIAWV"/>
<dbReference type="OrthoDB" id="8876749at2759"/>
<dbReference type="PAN-GO" id="P59543">
    <property type="GO annotations" value="3 GO annotations based on evolutionary models"/>
</dbReference>
<dbReference type="PhylomeDB" id="P59543"/>
<dbReference type="TreeFam" id="TF335891"/>
<dbReference type="PathwayCommons" id="P59543"/>
<dbReference type="Reactome" id="R-HSA-418594">
    <property type="pathway name" value="G alpha (i) signalling events"/>
</dbReference>
<dbReference type="Reactome" id="R-HSA-420499">
    <property type="pathway name" value="Class C/3 (Metabotropic glutamate/pheromone receptors)"/>
</dbReference>
<dbReference type="Reactome" id="R-HSA-9717207">
    <property type="pathway name" value="Sensory perception of sweet, bitter, and umami (glutamate) taste"/>
</dbReference>
<dbReference type="BioGRID-ORCS" id="259295">
    <property type="hits" value="10 hits in 1062 CRISPR screens"/>
</dbReference>
<dbReference type="GeneWiki" id="TAS2R20"/>
<dbReference type="GenomeRNAi" id="259295"/>
<dbReference type="Pharos" id="P59543">
    <property type="development level" value="Tchem"/>
</dbReference>
<dbReference type="PRO" id="PR:P59543"/>
<dbReference type="Proteomes" id="UP000005640">
    <property type="component" value="Chromosome 12"/>
</dbReference>
<dbReference type="RNAct" id="P59543">
    <property type="molecule type" value="protein"/>
</dbReference>
<dbReference type="Bgee" id="ENSG00000255837">
    <property type="expression patterns" value="Expressed in corpus callosum and 93 other cell types or tissues"/>
</dbReference>
<dbReference type="GO" id="GO:0016020">
    <property type="term" value="C:membrane"/>
    <property type="evidence" value="ECO:0000318"/>
    <property type="project" value="GO_Central"/>
</dbReference>
<dbReference type="GO" id="GO:0005886">
    <property type="term" value="C:plasma membrane"/>
    <property type="evidence" value="ECO:0000304"/>
    <property type="project" value="Reactome"/>
</dbReference>
<dbReference type="GO" id="GO:0033038">
    <property type="term" value="F:bitter taste receptor activity"/>
    <property type="evidence" value="ECO:0007669"/>
    <property type="project" value="InterPro"/>
</dbReference>
<dbReference type="GO" id="GO:0004930">
    <property type="term" value="F:G protein-coupled receptor activity"/>
    <property type="evidence" value="ECO:0007669"/>
    <property type="project" value="UniProtKB-KW"/>
</dbReference>
<dbReference type="CDD" id="cd15027">
    <property type="entry name" value="7tm_TAS2R43-like"/>
    <property type="match status" value="1"/>
</dbReference>
<dbReference type="FunFam" id="1.20.1070.10:FF:000042">
    <property type="entry name" value="Taste receptor type 2 member 7"/>
    <property type="match status" value="1"/>
</dbReference>
<dbReference type="Gene3D" id="1.20.1070.10">
    <property type="entry name" value="Rhodopsin 7-helix transmembrane proteins"/>
    <property type="match status" value="1"/>
</dbReference>
<dbReference type="InterPro" id="IPR007960">
    <property type="entry name" value="TAS2R"/>
</dbReference>
<dbReference type="PANTHER" id="PTHR11394">
    <property type="entry name" value="TASTE RECEPTOR TYPE 2"/>
    <property type="match status" value="1"/>
</dbReference>
<dbReference type="PANTHER" id="PTHR11394:SF27">
    <property type="entry name" value="TASTE RECEPTOR TYPE 2 MEMBER 20"/>
    <property type="match status" value="1"/>
</dbReference>
<dbReference type="Pfam" id="PF05296">
    <property type="entry name" value="TAS2R"/>
    <property type="match status" value="1"/>
</dbReference>
<dbReference type="SUPFAM" id="SSF81321">
    <property type="entry name" value="Family A G protein-coupled receptor-like"/>
    <property type="match status" value="1"/>
</dbReference>